<reference key="1">
    <citation type="submission" date="2007-05" db="EMBL/GenBank/DDBJ databases">
        <title>Complete sequence of Dehalococcoides sp. BAV1.</title>
        <authorList>
            <consortium name="US DOE Joint Genome Institute"/>
            <person name="Copeland A."/>
            <person name="Lucas S."/>
            <person name="Lapidus A."/>
            <person name="Barry K."/>
            <person name="Detter J.C."/>
            <person name="Glavina del Rio T."/>
            <person name="Hammon N."/>
            <person name="Israni S."/>
            <person name="Pitluck S."/>
            <person name="Lowry S."/>
            <person name="Clum A."/>
            <person name="Schmutz J."/>
            <person name="Larimer F."/>
            <person name="Land M."/>
            <person name="Hauser L."/>
            <person name="Kyrpides N."/>
            <person name="Kim E."/>
            <person name="Ritalahti K.M."/>
            <person name="Loeffler F."/>
            <person name="Richardson P."/>
        </authorList>
    </citation>
    <scope>NUCLEOTIDE SEQUENCE [LARGE SCALE GENOMIC DNA]</scope>
    <source>
        <strain>ATCC BAA-2100 / JCM 16839 / KCTC 5957 / BAV1</strain>
    </source>
</reference>
<accession>A5FQT3</accession>
<protein>
    <recommendedName>
        <fullName evidence="1">4-hydroxy-tetrahydrodipicolinate reductase</fullName>
        <shortName evidence="1">HTPA reductase</shortName>
        <ecNumber evidence="1">1.17.1.8</ecNumber>
    </recommendedName>
</protein>
<proteinExistence type="inferred from homology"/>
<organism>
    <name type="scientific">Dehalococcoides mccartyi (strain ATCC BAA-2100 / JCM 16839 / KCTC 5957 / BAV1)</name>
    <dbReference type="NCBI Taxonomy" id="216389"/>
    <lineage>
        <taxon>Bacteria</taxon>
        <taxon>Bacillati</taxon>
        <taxon>Chloroflexota</taxon>
        <taxon>Dehalococcoidia</taxon>
        <taxon>Dehalococcoidales</taxon>
        <taxon>Dehalococcoidaceae</taxon>
        <taxon>Dehalococcoides</taxon>
    </lineage>
</organism>
<name>DAPB_DEHMB</name>
<feature type="chain" id="PRO_1000075675" description="4-hydroxy-tetrahydrodipicolinate reductase">
    <location>
        <begin position="1"/>
        <end position="263"/>
    </location>
</feature>
<feature type="active site" description="Proton donor/acceptor" evidence="1">
    <location>
        <position position="153"/>
    </location>
</feature>
<feature type="active site" description="Proton donor" evidence="1">
    <location>
        <position position="157"/>
    </location>
</feature>
<feature type="binding site" evidence="1">
    <location>
        <begin position="10"/>
        <end position="15"/>
    </location>
    <ligand>
        <name>NAD(+)</name>
        <dbReference type="ChEBI" id="CHEBI:57540"/>
    </ligand>
</feature>
<feature type="binding site" evidence="1">
    <location>
        <position position="38"/>
    </location>
    <ligand>
        <name>NADP(+)</name>
        <dbReference type="ChEBI" id="CHEBI:58349"/>
    </ligand>
</feature>
<feature type="binding site" evidence="1">
    <location>
        <begin position="97"/>
        <end position="99"/>
    </location>
    <ligand>
        <name>NAD(+)</name>
        <dbReference type="ChEBI" id="CHEBI:57540"/>
    </ligand>
</feature>
<feature type="binding site" evidence="1">
    <location>
        <begin position="123"/>
        <end position="126"/>
    </location>
    <ligand>
        <name>NAD(+)</name>
        <dbReference type="ChEBI" id="CHEBI:57540"/>
    </ligand>
</feature>
<feature type="binding site" evidence="1">
    <location>
        <position position="154"/>
    </location>
    <ligand>
        <name>(S)-2,3,4,5-tetrahydrodipicolinate</name>
        <dbReference type="ChEBI" id="CHEBI:16845"/>
    </ligand>
</feature>
<feature type="binding site" evidence="1">
    <location>
        <begin position="163"/>
        <end position="164"/>
    </location>
    <ligand>
        <name>(S)-2,3,4,5-tetrahydrodipicolinate</name>
        <dbReference type="ChEBI" id="CHEBI:16845"/>
    </ligand>
</feature>
<dbReference type="EC" id="1.17.1.8" evidence="1"/>
<dbReference type="EMBL" id="CP000688">
    <property type="protein sequence ID" value="ABQ17444.1"/>
    <property type="molecule type" value="Genomic_DNA"/>
</dbReference>
<dbReference type="SMR" id="A5FQT3"/>
<dbReference type="KEGG" id="deb:DehaBAV1_0862"/>
<dbReference type="PATRIC" id="fig|216389.18.peg.912"/>
<dbReference type="HOGENOM" id="CLU_047479_0_1_0"/>
<dbReference type="UniPathway" id="UPA00034">
    <property type="reaction ID" value="UER00018"/>
</dbReference>
<dbReference type="GO" id="GO:0005829">
    <property type="term" value="C:cytosol"/>
    <property type="evidence" value="ECO:0007669"/>
    <property type="project" value="TreeGrafter"/>
</dbReference>
<dbReference type="GO" id="GO:0008839">
    <property type="term" value="F:4-hydroxy-tetrahydrodipicolinate reductase"/>
    <property type="evidence" value="ECO:0007669"/>
    <property type="project" value="UniProtKB-EC"/>
</dbReference>
<dbReference type="GO" id="GO:0051287">
    <property type="term" value="F:NAD binding"/>
    <property type="evidence" value="ECO:0007669"/>
    <property type="project" value="UniProtKB-UniRule"/>
</dbReference>
<dbReference type="GO" id="GO:0050661">
    <property type="term" value="F:NADP binding"/>
    <property type="evidence" value="ECO:0007669"/>
    <property type="project" value="UniProtKB-UniRule"/>
</dbReference>
<dbReference type="GO" id="GO:0016726">
    <property type="term" value="F:oxidoreductase activity, acting on CH or CH2 groups, NAD or NADP as acceptor"/>
    <property type="evidence" value="ECO:0007669"/>
    <property type="project" value="UniProtKB-UniRule"/>
</dbReference>
<dbReference type="GO" id="GO:0019877">
    <property type="term" value="P:diaminopimelate biosynthetic process"/>
    <property type="evidence" value="ECO:0007669"/>
    <property type="project" value="UniProtKB-UniRule"/>
</dbReference>
<dbReference type="GO" id="GO:0009089">
    <property type="term" value="P:lysine biosynthetic process via diaminopimelate"/>
    <property type="evidence" value="ECO:0007669"/>
    <property type="project" value="UniProtKB-UniRule"/>
</dbReference>
<dbReference type="CDD" id="cd02274">
    <property type="entry name" value="DHDPR_N"/>
    <property type="match status" value="1"/>
</dbReference>
<dbReference type="FunFam" id="3.30.360.10:FF:000009">
    <property type="entry name" value="4-hydroxy-tetrahydrodipicolinate reductase"/>
    <property type="match status" value="1"/>
</dbReference>
<dbReference type="Gene3D" id="3.30.360.10">
    <property type="entry name" value="Dihydrodipicolinate Reductase, domain 2"/>
    <property type="match status" value="1"/>
</dbReference>
<dbReference type="Gene3D" id="3.40.50.720">
    <property type="entry name" value="NAD(P)-binding Rossmann-like Domain"/>
    <property type="match status" value="1"/>
</dbReference>
<dbReference type="HAMAP" id="MF_00102">
    <property type="entry name" value="DapB"/>
    <property type="match status" value="1"/>
</dbReference>
<dbReference type="InterPro" id="IPR022663">
    <property type="entry name" value="DapB_C"/>
</dbReference>
<dbReference type="InterPro" id="IPR000846">
    <property type="entry name" value="DapB_N"/>
</dbReference>
<dbReference type="InterPro" id="IPR022664">
    <property type="entry name" value="DapB_N_CS"/>
</dbReference>
<dbReference type="InterPro" id="IPR023940">
    <property type="entry name" value="DHDPR_bac"/>
</dbReference>
<dbReference type="InterPro" id="IPR036291">
    <property type="entry name" value="NAD(P)-bd_dom_sf"/>
</dbReference>
<dbReference type="NCBIfam" id="TIGR00036">
    <property type="entry name" value="dapB"/>
    <property type="match status" value="1"/>
</dbReference>
<dbReference type="PANTHER" id="PTHR20836:SF0">
    <property type="entry name" value="4-HYDROXY-TETRAHYDRODIPICOLINATE REDUCTASE 1, CHLOROPLASTIC-RELATED"/>
    <property type="match status" value="1"/>
</dbReference>
<dbReference type="PANTHER" id="PTHR20836">
    <property type="entry name" value="DIHYDRODIPICOLINATE REDUCTASE"/>
    <property type="match status" value="1"/>
</dbReference>
<dbReference type="Pfam" id="PF05173">
    <property type="entry name" value="DapB_C"/>
    <property type="match status" value="1"/>
</dbReference>
<dbReference type="Pfam" id="PF01113">
    <property type="entry name" value="DapB_N"/>
    <property type="match status" value="1"/>
</dbReference>
<dbReference type="PIRSF" id="PIRSF000161">
    <property type="entry name" value="DHPR"/>
    <property type="match status" value="1"/>
</dbReference>
<dbReference type="SUPFAM" id="SSF55347">
    <property type="entry name" value="Glyceraldehyde-3-phosphate dehydrogenase-like, C-terminal domain"/>
    <property type="match status" value="1"/>
</dbReference>
<dbReference type="SUPFAM" id="SSF51735">
    <property type="entry name" value="NAD(P)-binding Rossmann-fold domains"/>
    <property type="match status" value="1"/>
</dbReference>
<dbReference type="PROSITE" id="PS01298">
    <property type="entry name" value="DAPB"/>
    <property type="match status" value="1"/>
</dbReference>
<gene>
    <name evidence="1" type="primary">dapB</name>
    <name type="ordered locus">DehaBAV1_0862</name>
</gene>
<sequence length="263" mass="28076">MTPIKVVVHGASGKMGQEVLKTLCQENNLHPVGAVDIRAENPAMALPDGSGSIPYSADLSSILSQTKPDVMVDFTVAKASMPAVRIAAAHKVNLVIGTTGFSPEEISEIEQLAKTNDIGIILAPNFALGAIIMVHLAQVASRFLSSAEVIELHHDKKLDSPSGTALVTVASMLEARGEAFNKPPKENLTDARGQEHDGIRVHSVRLPGLLAHQEVIFGAAGQTLTIRHDAFSRECYMPGVLLAIKEIVHTKGFVFGLDKLLKL</sequence>
<evidence type="ECO:0000255" key="1">
    <source>
        <dbReference type="HAMAP-Rule" id="MF_00102"/>
    </source>
</evidence>
<evidence type="ECO:0000305" key="2"/>
<comment type="function">
    <text evidence="1">Catalyzes the conversion of 4-hydroxy-tetrahydrodipicolinate (HTPA) to tetrahydrodipicolinate.</text>
</comment>
<comment type="catalytic activity">
    <reaction evidence="1">
        <text>(S)-2,3,4,5-tetrahydrodipicolinate + NAD(+) + H2O = (2S,4S)-4-hydroxy-2,3,4,5-tetrahydrodipicolinate + NADH + H(+)</text>
        <dbReference type="Rhea" id="RHEA:35323"/>
        <dbReference type="ChEBI" id="CHEBI:15377"/>
        <dbReference type="ChEBI" id="CHEBI:15378"/>
        <dbReference type="ChEBI" id="CHEBI:16845"/>
        <dbReference type="ChEBI" id="CHEBI:57540"/>
        <dbReference type="ChEBI" id="CHEBI:57945"/>
        <dbReference type="ChEBI" id="CHEBI:67139"/>
        <dbReference type="EC" id="1.17.1.8"/>
    </reaction>
</comment>
<comment type="catalytic activity">
    <reaction evidence="1">
        <text>(S)-2,3,4,5-tetrahydrodipicolinate + NADP(+) + H2O = (2S,4S)-4-hydroxy-2,3,4,5-tetrahydrodipicolinate + NADPH + H(+)</text>
        <dbReference type="Rhea" id="RHEA:35331"/>
        <dbReference type="ChEBI" id="CHEBI:15377"/>
        <dbReference type="ChEBI" id="CHEBI:15378"/>
        <dbReference type="ChEBI" id="CHEBI:16845"/>
        <dbReference type="ChEBI" id="CHEBI:57783"/>
        <dbReference type="ChEBI" id="CHEBI:58349"/>
        <dbReference type="ChEBI" id="CHEBI:67139"/>
        <dbReference type="EC" id="1.17.1.8"/>
    </reaction>
</comment>
<comment type="pathway">
    <text evidence="1">Amino-acid biosynthesis; L-lysine biosynthesis via DAP pathway; (S)-tetrahydrodipicolinate from L-aspartate: step 4/4.</text>
</comment>
<comment type="subcellular location">
    <subcellularLocation>
        <location evidence="1">Cytoplasm</location>
    </subcellularLocation>
</comment>
<comment type="similarity">
    <text evidence="1">Belongs to the DapB family.</text>
</comment>
<comment type="caution">
    <text evidence="2">Was originally thought to be a dihydrodipicolinate reductase (DHDPR), catalyzing the conversion of dihydrodipicolinate to tetrahydrodipicolinate. However, it was shown in E.coli that the substrate of the enzymatic reaction is not dihydrodipicolinate (DHDP) but in fact (2S,4S)-4-hydroxy-2,3,4,5-tetrahydrodipicolinic acid (HTPA), the product released by the DapA-catalyzed reaction.</text>
</comment>
<keyword id="KW-0028">Amino-acid biosynthesis</keyword>
<keyword id="KW-0963">Cytoplasm</keyword>
<keyword id="KW-0220">Diaminopimelate biosynthesis</keyword>
<keyword id="KW-0457">Lysine biosynthesis</keyword>
<keyword id="KW-0520">NAD</keyword>
<keyword id="KW-0521">NADP</keyword>
<keyword id="KW-0560">Oxidoreductase</keyword>